<dbReference type="EC" id="1.1.1.38" evidence="1"/>
<dbReference type="EMBL" id="FM209186">
    <property type="protein sequence ID" value="CAW26269.1"/>
    <property type="molecule type" value="Genomic_DNA"/>
</dbReference>
<dbReference type="RefSeq" id="WP_012613762.1">
    <property type="nucleotide sequence ID" value="NC_011770.1"/>
</dbReference>
<dbReference type="SMR" id="B7UWK9"/>
<dbReference type="KEGG" id="pag:PLES_15411"/>
<dbReference type="HOGENOM" id="CLU_011405_5_2_6"/>
<dbReference type="GO" id="GO:0005829">
    <property type="term" value="C:cytosol"/>
    <property type="evidence" value="ECO:0007669"/>
    <property type="project" value="TreeGrafter"/>
</dbReference>
<dbReference type="GO" id="GO:0004471">
    <property type="term" value="F:malate dehydrogenase (decarboxylating) (NAD+) activity"/>
    <property type="evidence" value="ECO:0007669"/>
    <property type="project" value="UniProtKB-UniRule"/>
</dbReference>
<dbReference type="GO" id="GO:0046872">
    <property type="term" value="F:metal ion binding"/>
    <property type="evidence" value="ECO:0007669"/>
    <property type="project" value="UniProtKB-KW"/>
</dbReference>
<dbReference type="GO" id="GO:0051287">
    <property type="term" value="F:NAD binding"/>
    <property type="evidence" value="ECO:0007669"/>
    <property type="project" value="InterPro"/>
</dbReference>
<dbReference type="GO" id="GO:0008948">
    <property type="term" value="F:oxaloacetate decarboxylase activity"/>
    <property type="evidence" value="ECO:0007669"/>
    <property type="project" value="UniProtKB-UniRule"/>
</dbReference>
<dbReference type="GO" id="GO:0006108">
    <property type="term" value="P:malate metabolic process"/>
    <property type="evidence" value="ECO:0007669"/>
    <property type="project" value="TreeGrafter"/>
</dbReference>
<dbReference type="FunFam" id="3.40.50.10380:FF:000001">
    <property type="entry name" value="NAD-dependent malic enzyme"/>
    <property type="match status" value="1"/>
</dbReference>
<dbReference type="FunFam" id="3.40.50.720:FF:000055">
    <property type="entry name" value="NAD-dependent malic enzyme"/>
    <property type="match status" value="1"/>
</dbReference>
<dbReference type="Gene3D" id="3.40.50.10380">
    <property type="entry name" value="Malic enzyme, N-terminal domain"/>
    <property type="match status" value="1"/>
</dbReference>
<dbReference type="Gene3D" id="3.40.50.720">
    <property type="entry name" value="NAD(P)-binding Rossmann-like Domain"/>
    <property type="match status" value="1"/>
</dbReference>
<dbReference type="HAMAP" id="MF_01619">
    <property type="entry name" value="NAD_malic_enz"/>
    <property type="match status" value="1"/>
</dbReference>
<dbReference type="InterPro" id="IPR046346">
    <property type="entry name" value="Aminoacid_DH-like_N_sf"/>
</dbReference>
<dbReference type="InterPro" id="IPR015884">
    <property type="entry name" value="Malic_enzyme_CS"/>
</dbReference>
<dbReference type="InterPro" id="IPR012301">
    <property type="entry name" value="Malic_N_dom"/>
</dbReference>
<dbReference type="InterPro" id="IPR037062">
    <property type="entry name" value="Malic_N_dom_sf"/>
</dbReference>
<dbReference type="InterPro" id="IPR012302">
    <property type="entry name" value="Malic_NAD-bd"/>
</dbReference>
<dbReference type="InterPro" id="IPR001891">
    <property type="entry name" value="Malic_OxRdtase"/>
</dbReference>
<dbReference type="InterPro" id="IPR036291">
    <property type="entry name" value="NAD(P)-bd_dom_sf"/>
</dbReference>
<dbReference type="InterPro" id="IPR023667">
    <property type="entry name" value="NAD_malic_enz_proteobac"/>
</dbReference>
<dbReference type="NCBIfam" id="NF010052">
    <property type="entry name" value="PRK13529.1"/>
    <property type="match status" value="1"/>
</dbReference>
<dbReference type="PANTHER" id="PTHR23406">
    <property type="entry name" value="MALIC ENZYME-RELATED"/>
    <property type="match status" value="1"/>
</dbReference>
<dbReference type="PANTHER" id="PTHR23406:SF34">
    <property type="entry name" value="NAD-DEPENDENT MALIC ENZYME, MITOCHONDRIAL"/>
    <property type="match status" value="1"/>
</dbReference>
<dbReference type="Pfam" id="PF00390">
    <property type="entry name" value="malic"/>
    <property type="match status" value="1"/>
</dbReference>
<dbReference type="Pfam" id="PF03949">
    <property type="entry name" value="Malic_M"/>
    <property type="match status" value="1"/>
</dbReference>
<dbReference type="PIRSF" id="PIRSF000106">
    <property type="entry name" value="ME"/>
    <property type="match status" value="1"/>
</dbReference>
<dbReference type="PRINTS" id="PR00072">
    <property type="entry name" value="MALOXRDTASE"/>
</dbReference>
<dbReference type="SMART" id="SM01274">
    <property type="entry name" value="malic"/>
    <property type="match status" value="1"/>
</dbReference>
<dbReference type="SMART" id="SM00919">
    <property type="entry name" value="Malic_M"/>
    <property type="match status" value="1"/>
</dbReference>
<dbReference type="SUPFAM" id="SSF53223">
    <property type="entry name" value="Aminoacid dehydrogenase-like, N-terminal domain"/>
    <property type="match status" value="1"/>
</dbReference>
<dbReference type="SUPFAM" id="SSF51735">
    <property type="entry name" value="NAD(P)-binding Rossmann-fold domains"/>
    <property type="match status" value="1"/>
</dbReference>
<dbReference type="PROSITE" id="PS00331">
    <property type="entry name" value="MALIC_ENZYMES"/>
    <property type="match status" value="1"/>
</dbReference>
<gene>
    <name evidence="1" type="primary">maeA</name>
    <name type="ordered locus">PLES_15411</name>
</gene>
<evidence type="ECO:0000255" key="1">
    <source>
        <dbReference type="HAMAP-Rule" id="MF_01619"/>
    </source>
</evidence>
<reference key="1">
    <citation type="journal article" date="2009" name="Genome Res.">
        <title>Newly introduced genomic prophage islands are critical determinants of in vivo competitiveness in the Liverpool epidemic strain of Pseudomonas aeruginosa.</title>
        <authorList>
            <person name="Winstanley C."/>
            <person name="Langille M.G.I."/>
            <person name="Fothergill J.L."/>
            <person name="Kukavica-Ibrulj I."/>
            <person name="Paradis-Bleau C."/>
            <person name="Sanschagrin F."/>
            <person name="Thomson N.R."/>
            <person name="Winsor G.L."/>
            <person name="Quail M.A."/>
            <person name="Lennard N."/>
            <person name="Bignell A."/>
            <person name="Clarke L."/>
            <person name="Seeger K."/>
            <person name="Saunders D."/>
            <person name="Harris D."/>
            <person name="Parkhill J."/>
            <person name="Hancock R.E.W."/>
            <person name="Brinkman F.S.L."/>
            <person name="Levesque R.C."/>
        </authorList>
    </citation>
    <scope>NUCLEOTIDE SEQUENCE [LARGE SCALE GENOMIC DNA]</scope>
    <source>
        <strain>LESB58</strain>
    </source>
</reference>
<comment type="catalytic activity">
    <reaction evidence="1">
        <text>(S)-malate + NAD(+) = pyruvate + CO2 + NADH</text>
        <dbReference type="Rhea" id="RHEA:12653"/>
        <dbReference type="ChEBI" id="CHEBI:15361"/>
        <dbReference type="ChEBI" id="CHEBI:15589"/>
        <dbReference type="ChEBI" id="CHEBI:16526"/>
        <dbReference type="ChEBI" id="CHEBI:57540"/>
        <dbReference type="ChEBI" id="CHEBI:57945"/>
        <dbReference type="EC" id="1.1.1.38"/>
    </reaction>
</comment>
<comment type="catalytic activity">
    <reaction evidence="1">
        <text>oxaloacetate + H(+) = pyruvate + CO2</text>
        <dbReference type="Rhea" id="RHEA:15641"/>
        <dbReference type="ChEBI" id="CHEBI:15361"/>
        <dbReference type="ChEBI" id="CHEBI:15378"/>
        <dbReference type="ChEBI" id="CHEBI:16452"/>
        <dbReference type="ChEBI" id="CHEBI:16526"/>
        <dbReference type="EC" id="1.1.1.38"/>
    </reaction>
</comment>
<comment type="cofactor">
    <cofactor evidence="1">
        <name>Mg(2+)</name>
        <dbReference type="ChEBI" id="CHEBI:18420"/>
    </cofactor>
    <cofactor evidence="1">
        <name>Mn(2+)</name>
        <dbReference type="ChEBI" id="CHEBI:29035"/>
    </cofactor>
    <text evidence="1">Divalent metal cations. Prefers magnesium or manganese.</text>
</comment>
<comment type="subunit">
    <text evidence="1">Homotetramer.</text>
</comment>
<comment type="similarity">
    <text evidence="1">Belongs to the malic enzymes family.</text>
</comment>
<feature type="chain" id="PRO_1000186002" description="NAD-dependent malic enzyme">
    <location>
        <begin position="1"/>
        <end position="564"/>
    </location>
</feature>
<feature type="active site" description="Proton donor" evidence="1">
    <location>
        <position position="102"/>
    </location>
</feature>
<feature type="active site" description="Proton acceptor" evidence="1">
    <location>
        <position position="173"/>
    </location>
</feature>
<feature type="binding site" evidence="1">
    <location>
        <position position="155"/>
    </location>
    <ligand>
        <name>NAD(+)</name>
        <dbReference type="ChEBI" id="CHEBI:57540"/>
    </ligand>
</feature>
<feature type="binding site" evidence="1">
    <location>
        <position position="244"/>
    </location>
    <ligand>
        <name>a divalent metal cation</name>
        <dbReference type="ChEBI" id="CHEBI:60240"/>
    </ligand>
</feature>
<feature type="binding site" evidence="1">
    <location>
        <position position="245"/>
    </location>
    <ligand>
        <name>a divalent metal cation</name>
        <dbReference type="ChEBI" id="CHEBI:60240"/>
    </ligand>
</feature>
<feature type="binding site" evidence="1">
    <location>
        <position position="268"/>
    </location>
    <ligand>
        <name>a divalent metal cation</name>
        <dbReference type="ChEBI" id="CHEBI:60240"/>
    </ligand>
</feature>
<feature type="binding site" evidence="1">
    <location>
        <position position="268"/>
    </location>
    <ligand>
        <name>NAD(+)</name>
        <dbReference type="ChEBI" id="CHEBI:57540"/>
    </ligand>
</feature>
<feature type="binding site" evidence="1">
    <location>
        <position position="417"/>
    </location>
    <ligand>
        <name>NAD(+)</name>
        <dbReference type="ChEBI" id="CHEBI:57540"/>
    </ligand>
</feature>
<feature type="site" description="Important for activity" evidence="1">
    <location>
        <position position="268"/>
    </location>
</feature>
<protein>
    <recommendedName>
        <fullName evidence="1">NAD-dependent malic enzyme</fullName>
        <shortName evidence="1">NAD-ME</shortName>
        <ecNumber evidence="1">1.1.1.38</ecNumber>
    </recommendedName>
</protein>
<accession>B7UWK9</accession>
<proteinExistence type="inferred from homology"/>
<keyword id="KW-0479">Metal-binding</keyword>
<keyword id="KW-0520">NAD</keyword>
<keyword id="KW-0560">Oxidoreductase</keyword>
<organism>
    <name type="scientific">Pseudomonas aeruginosa (strain LESB58)</name>
    <dbReference type="NCBI Taxonomy" id="557722"/>
    <lineage>
        <taxon>Bacteria</taxon>
        <taxon>Pseudomonadati</taxon>
        <taxon>Pseudomonadota</taxon>
        <taxon>Gammaproteobacteria</taxon>
        <taxon>Pseudomonadales</taxon>
        <taxon>Pseudomonadaceae</taxon>
        <taxon>Pseudomonas</taxon>
    </lineage>
</organism>
<name>MAO1_PSEA8</name>
<sequence length="564" mass="62448">MTETAKRPLYVPHAGPSLLEMPLLNKGSAFSTQERIDFNLQGLLPHNIETIEEQTERAYSQYNLCNTDLDRHIFLRSIQDNNETLFFRLLEEHLEEMMPIIYTPTVGQACQEFSKIYRTHRGLFISYPDRERIDDILRSATKNNVKIVVVTDSERILGLGDQGIGGMGIPIGKLSLYTACGGISPAYTLPVVLDVGTNNPDLLNDPMYMGWRHERVSGAQYEEFVDLFIQAIKRRWPNVLLQFEDFAQTNAMPLLERYKDELCCFNDDIQGTAAVAVGTLLAACKAKGEKLSEQTVTFVGAGSAGCGIAEQIIAAMQLEGLDEAQARRRIFMVDRWGLLTDDMSNLLDFQHRLAQKRADLGAWGGQQGDDLALLEVIRNARPTVLIGVSGQRGLFSEEVIRELHSHCKQPLVMPLSNPTSRVEATPQEILNWTDGQALVATGSPFQPVQVGDKRIPIAQCNNAYIFPGIGLGVIAVRANRVTEGMLMAAANALANCSPIVTQGEGAVLPALGDIREVSKRIAVAVAKQAQAEGKALHTSDEVLNDAIEANFWFPRYRAYRRTSF</sequence>